<reference key="1">
    <citation type="journal article" date="2001" name="Nature">
        <title>Massive gene decay in the leprosy bacillus.</title>
        <authorList>
            <person name="Cole S.T."/>
            <person name="Eiglmeier K."/>
            <person name="Parkhill J."/>
            <person name="James K.D."/>
            <person name="Thomson N.R."/>
            <person name="Wheeler P.R."/>
            <person name="Honore N."/>
            <person name="Garnier T."/>
            <person name="Churcher C.M."/>
            <person name="Harris D.E."/>
            <person name="Mungall K.L."/>
            <person name="Basham D."/>
            <person name="Brown D."/>
            <person name="Chillingworth T."/>
            <person name="Connor R."/>
            <person name="Davies R.M."/>
            <person name="Devlin K."/>
            <person name="Duthoy S."/>
            <person name="Feltwell T."/>
            <person name="Fraser A."/>
            <person name="Hamlin N."/>
            <person name="Holroyd S."/>
            <person name="Hornsby T."/>
            <person name="Jagels K."/>
            <person name="Lacroix C."/>
            <person name="Maclean J."/>
            <person name="Moule S."/>
            <person name="Murphy L.D."/>
            <person name="Oliver K."/>
            <person name="Quail M.A."/>
            <person name="Rajandream M.A."/>
            <person name="Rutherford K.M."/>
            <person name="Rutter S."/>
            <person name="Seeger K."/>
            <person name="Simon S."/>
            <person name="Simmonds M."/>
            <person name="Skelton J."/>
            <person name="Squares R."/>
            <person name="Squares S."/>
            <person name="Stevens K."/>
            <person name="Taylor K."/>
            <person name="Whitehead S."/>
            <person name="Woodward J.R."/>
            <person name="Barrell B.G."/>
        </authorList>
    </citation>
    <scope>NUCLEOTIDE SEQUENCE [LARGE SCALE GENOMIC DNA]</scope>
    <source>
        <strain>TN</strain>
    </source>
</reference>
<organism>
    <name type="scientific">Mycobacterium leprae (strain TN)</name>
    <dbReference type="NCBI Taxonomy" id="272631"/>
    <lineage>
        <taxon>Bacteria</taxon>
        <taxon>Bacillati</taxon>
        <taxon>Actinomycetota</taxon>
        <taxon>Actinomycetes</taxon>
        <taxon>Mycobacteriales</taxon>
        <taxon>Mycobacteriaceae</taxon>
        <taxon>Mycobacterium</taxon>
    </lineage>
</organism>
<proteinExistence type="inferred from homology"/>
<keyword id="KW-0030">Aminoacyl-tRNA synthetase</keyword>
<keyword id="KW-0067">ATP-binding</keyword>
<keyword id="KW-0963">Cytoplasm</keyword>
<keyword id="KW-0436">Ligase</keyword>
<keyword id="KW-0547">Nucleotide-binding</keyword>
<keyword id="KW-0648">Protein biosynthesis</keyword>
<keyword id="KW-1185">Reference proteome</keyword>
<protein>
    <recommendedName>
        <fullName evidence="1">Serine--tRNA ligase</fullName>
        <ecNumber evidence="1">6.1.1.11</ecNumber>
    </recommendedName>
    <alternativeName>
        <fullName evidence="1">Seryl-tRNA synthetase</fullName>
        <shortName evidence="1">SerRS</shortName>
    </alternativeName>
    <alternativeName>
        <fullName evidence="1">Seryl-tRNA(Ser/Sec) synthetase</fullName>
    </alternativeName>
</protein>
<feature type="chain" id="PRO_0000122085" description="Serine--tRNA ligase">
    <location>
        <begin position="1"/>
        <end position="417"/>
    </location>
</feature>
<feature type="binding site" evidence="1">
    <location>
        <begin position="224"/>
        <end position="226"/>
    </location>
    <ligand>
        <name>L-serine</name>
        <dbReference type="ChEBI" id="CHEBI:33384"/>
    </ligand>
</feature>
<feature type="binding site" evidence="1">
    <location>
        <begin position="255"/>
        <end position="257"/>
    </location>
    <ligand>
        <name>ATP</name>
        <dbReference type="ChEBI" id="CHEBI:30616"/>
    </ligand>
</feature>
<feature type="binding site" evidence="1">
    <location>
        <position position="271"/>
    </location>
    <ligand>
        <name>ATP</name>
        <dbReference type="ChEBI" id="CHEBI:30616"/>
    </ligand>
</feature>
<feature type="binding site" evidence="1">
    <location>
        <position position="278"/>
    </location>
    <ligand>
        <name>L-serine</name>
        <dbReference type="ChEBI" id="CHEBI:33384"/>
    </ligand>
</feature>
<feature type="binding site" evidence="1">
    <location>
        <begin position="342"/>
        <end position="345"/>
    </location>
    <ligand>
        <name>ATP</name>
        <dbReference type="ChEBI" id="CHEBI:30616"/>
    </ligand>
</feature>
<feature type="binding site" evidence="1">
    <location>
        <position position="377"/>
    </location>
    <ligand>
        <name>L-serine</name>
        <dbReference type="ChEBI" id="CHEBI:33384"/>
    </ligand>
</feature>
<accession>Q9CDC1</accession>
<comment type="function">
    <text evidence="1">Catalyzes the attachment of serine to tRNA(Ser). Is also able to aminoacylate tRNA(Sec) with serine, to form the misacylated tRNA L-seryl-tRNA(Sec), which will be further converted into selenocysteinyl-tRNA(Sec).</text>
</comment>
<comment type="catalytic activity">
    <reaction evidence="1">
        <text>tRNA(Ser) + L-serine + ATP = L-seryl-tRNA(Ser) + AMP + diphosphate + H(+)</text>
        <dbReference type="Rhea" id="RHEA:12292"/>
        <dbReference type="Rhea" id="RHEA-COMP:9669"/>
        <dbReference type="Rhea" id="RHEA-COMP:9703"/>
        <dbReference type="ChEBI" id="CHEBI:15378"/>
        <dbReference type="ChEBI" id="CHEBI:30616"/>
        <dbReference type="ChEBI" id="CHEBI:33019"/>
        <dbReference type="ChEBI" id="CHEBI:33384"/>
        <dbReference type="ChEBI" id="CHEBI:78442"/>
        <dbReference type="ChEBI" id="CHEBI:78533"/>
        <dbReference type="ChEBI" id="CHEBI:456215"/>
        <dbReference type="EC" id="6.1.1.11"/>
    </reaction>
</comment>
<comment type="catalytic activity">
    <reaction evidence="1">
        <text>tRNA(Sec) + L-serine + ATP = L-seryl-tRNA(Sec) + AMP + diphosphate + H(+)</text>
        <dbReference type="Rhea" id="RHEA:42580"/>
        <dbReference type="Rhea" id="RHEA-COMP:9742"/>
        <dbReference type="Rhea" id="RHEA-COMP:10128"/>
        <dbReference type="ChEBI" id="CHEBI:15378"/>
        <dbReference type="ChEBI" id="CHEBI:30616"/>
        <dbReference type="ChEBI" id="CHEBI:33019"/>
        <dbReference type="ChEBI" id="CHEBI:33384"/>
        <dbReference type="ChEBI" id="CHEBI:78442"/>
        <dbReference type="ChEBI" id="CHEBI:78533"/>
        <dbReference type="ChEBI" id="CHEBI:456215"/>
        <dbReference type="EC" id="6.1.1.11"/>
    </reaction>
</comment>
<comment type="pathway">
    <text evidence="1">Aminoacyl-tRNA biosynthesis; selenocysteinyl-tRNA(Sec) biosynthesis; L-seryl-tRNA(Sec) from L-serine and tRNA(Sec): step 1/1.</text>
</comment>
<comment type="subunit">
    <text evidence="1">Homodimer. The tRNA molecule binds across the dimer.</text>
</comment>
<comment type="subcellular location">
    <subcellularLocation>
        <location evidence="1">Cytoplasm</location>
    </subcellularLocation>
</comment>
<comment type="domain">
    <text evidence="1">Consists of two distinct domains, a catalytic core and a N-terminal extension that is involved in tRNA binding.</text>
</comment>
<comment type="similarity">
    <text evidence="1">Belongs to the class-II aminoacyl-tRNA synthetase family. Type-1 seryl-tRNA synthetase subfamily.</text>
</comment>
<gene>
    <name evidence="1" type="primary">serS</name>
    <name type="ordered locus">ML0082</name>
</gene>
<evidence type="ECO:0000255" key="1">
    <source>
        <dbReference type="HAMAP-Rule" id="MF_00176"/>
    </source>
</evidence>
<dbReference type="EC" id="6.1.1.11" evidence="1"/>
<dbReference type="EMBL" id="AL583917">
    <property type="protein sequence ID" value="CAC29590.1"/>
    <property type="molecule type" value="Genomic_DNA"/>
</dbReference>
<dbReference type="PIR" id="B86919">
    <property type="entry name" value="B86919"/>
</dbReference>
<dbReference type="RefSeq" id="NP_301186.1">
    <property type="nucleotide sequence ID" value="NC_002677.1"/>
</dbReference>
<dbReference type="RefSeq" id="WP_010907511.1">
    <property type="nucleotide sequence ID" value="NC_002677.1"/>
</dbReference>
<dbReference type="SMR" id="Q9CDC1"/>
<dbReference type="STRING" id="272631.gene:17573894"/>
<dbReference type="KEGG" id="mle:ML0082"/>
<dbReference type="PATRIC" id="fig|272631.5.peg.127"/>
<dbReference type="Leproma" id="ML0082"/>
<dbReference type="eggNOG" id="COG0172">
    <property type="taxonomic scope" value="Bacteria"/>
</dbReference>
<dbReference type="HOGENOM" id="CLU_023797_0_1_11"/>
<dbReference type="OrthoDB" id="9804647at2"/>
<dbReference type="UniPathway" id="UPA00906">
    <property type="reaction ID" value="UER00895"/>
</dbReference>
<dbReference type="Proteomes" id="UP000000806">
    <property type="component" value="Chromosome"/>
</dbReference>
<dbReference type="GO" id="GO:0005737">
    <property type="term" value="C:cytoplasm"/>
    <property type="evidence" value="ECO:0007669"/>
    <property type="project" value="UniProtKB-SubCell"/>
</dbReference>
<dbReference type="GO" id="GO:0005524">
    <property type="term" value="F:ATP binding"/>
    <property type="evidence" value="ECO:0007669"/>
    <property type="project" value="UniProtKB-UniRule"/>
</dbReference>
<dbReference type="GO" id="GO:0004828">
    <property type="term" value="F:serine-tRNA ligase activity"/>
    <property type="evidence" value="ECO:0007669"/>
    <property type="project" value="UniProtKB-UniRule"/>
</dbReference>
<dbReference type="GO" id="GO:0016260">
    <property type="term" value="P:selenocysteine biosynthetic process"/>
    <property type="evidence" value="ECO:0007669"/>
    <property type="project" value="UniProtKB-UniRule"/>
</dbReference>
<dbReference type="GO" id="GO:0006434">
    <property type="term" value="P:seryl-tRNA aminoacylation"/>
    <property type="evidence" value="ECO:0007669"/>
    <property type="project" value="UniProtKB-UniRule"/>
</dbReference>
<dbReference type="Gene3D" id="3.30.930.10">
    <property type="entry name" value="Bira Bifunctional Protein, Domain 2"/>
    <property type="match status" value="1"/>
</dbReference>
<dbReference type="Gene3D" id="1.10.287.40">
    <property type="entry name" value="Serine-tRNA synthetase, tRNA binding domain"/>
    <property type="match status" value="1"/>
</dbReference>
<dbReference type="HAMAP" id="MF_00176">
    <property type="entry name" value="Ser_tRNA_synth_type1"/>
    <property type="match status" value="1"/>
</dbReference>
<dbReference type="InterPro" id="IPR002314">
    <property type="entry name" value="aa-tRNA-synt_IIb"/>
</dbReference>
<dbReference type="InterPro" id="IPR006195">
    <property type="entry name" value="aa-tRNA-synth_II"/>
</dbReference>
<dbReference type="InterPro" id="IPR045864">
    <property type="entry name" value="aa-tRNA-synth_II/BPL/LPL"/>
</dbReference>
<dbReference type="InterPro" id="IPR002317">
    <property type="entry name" value="Ser-tRNA-ligase_type_1"/>
</dbReference>
<dbReference type="InterPro" id="IPR015866">
    <property type="entry name" value="Ser-tRNA-synth_1_N"/>
</dbReference>
<dbReference type="InterPro" id="IPR042103">
    <property type="entry name" value="SerRS_1_N_sf"/>
</dbReference>
<dbReference type="InterPro" id="IPR010978">
    <property type="entry name" value="tRNA-bd_arm"/>
</dbReference>
<dbReference type="NCBIfam" id="TIGR00414">
    <property type="entry name" value="serS"/>
    <property type="match status" value="1"/>
</dbReference>
<dbReference type="PANTHER" id="PTHR11778">
    <property type="entry name" value="SERYL-TRNA SYNTHETASE"/>
    <property type="match status" value="1"/>
</dbReference>
<dbReference type="Pfam" id="PF02403">
    <property type="entry name" value="Seryl_tRNA_N"/>
    <property type="match status" value="1"/>
</dbReference>
<dbReference type="Pfam" id="PF00587">
    <property type="entry name" value="tRNA-synt_2b"/>
    <property type="match status" value="1"/>
</dbReference>
<dbReference type="PIRSF" id="PIRSF001529">
    <property type="entry name" value="Ser-tRNA-synth_IIa"/>
    <property type="match status" value="1"/>
</dbReference>
<dbReference type="PRINTS" id="PR00981">
    <property type="entry name" value="TRNASYNTHSER"/>
</dbReference>
<dbReference type="SUPFAM" id="SSF55681">
    <property type="entry name" value="Class II aaRS and biotin synthetases"/>
    <property type="match status" value="1"/>
</dbReference>
<dbReference type="SUPFAM" id="SSF46589">
    <property type="entry name" value="tRNA-binding arm"/>
    <property type="match status" value="1"/>
</dbReference>
<dbReference type="PROSITE" id="PS50862">
    <property type="entry name" value="AA_TRNA_LIGASE_II"/>
    <property type="match status" value="1"/>
</dbReference>
<sequence length="417" mass="45183">MIDLQLLREDPDVVRRSQLSRGEDPALVDALLTADTARRAAISAADSLRAEQKATSKSLGAASAEDRPALLERAKDLAEQVKAAETTQAETAAAFAAAYMAISNVVLDGVPTGGKDDYAVLDIVGDPPPLSNPKDHLELGEALGLIDMQRGAKVSGSRFYFLTGRGALLQLGLLQLALRLAVENDFIPMIPPVLVRPEVMSGTGFLGAHAEEVYRVDDLYLVGTSEVPMAGYHSDEILDLSVGPLRYAGWSSCFRREAGSHGKDTRGIIRVHQFDKVEGFVYCAPTDAEVEHQRLLGWQREMLARIEVPYRVIDVAAGDLGSSAARKFDCEAWVPTQGSYCELTSTSNCTTFQARRLATRYRDASGKPQIVATLNGTLGTTRWLVAILENHQRPDGSVRVPPALVPFVGTELLESPR</sequence>
<name>SYS_MYCLE</name>